<dbReference type="EC" id="3.4.21.88" evidence="1"/>
<dbReference type="EMBL" id="CP000911">
    <property type="protein sequence ID" value="ABY38243.1"/>
    <property type="molecule type" value="Genomic_DNA"/>
</dbReference>
<dbReference type="RefSeq" id="WP_002964272.1">
    <property type="nucleotide sequence ID" value="NC_010169.1"/>
</dbReference>
<dbReference type="SMR" id="B0CGU2"/>
<dbReference type="MEROPS" id="S24.001"/>
<dbReference type="GeneID" id="97533604"/>
<dbReference type="KEGG" id="bmt:BSUIS_A1192"/>
<dbReference type="HOGENOM" id="CLU_066192_45_2_5"/>
<dbReference type="Proteomes" id="UP000008545">
    <property type="component" value="Chromosome I"/>
</dbReference>
<dbReference type="GO" id="GO:0003677">
    <property type="term" value="F:DNA binding"/>
    <property type="evidence" value="ECO:0007669"/>
    <property type="project" value="UniProtKB-UniRule"/>
</dbReference>
<dbReference type="GO" id="GO:0004252">
    <property type="term" value="F:serine-type endopeptidase activity"/>
    <property type="evidence" value="ECO:0007669"/>
    <property type="project" value="UniProtKB-UniRule"/>
</dbReference>
<dbReference type="GO" id="GO:0006281">
    <property type="term" value="P:DNA repair"/>
    <property type="evidence" value="ECO:0007669"/>
    <property type="project" value="UniProtKB-UniRule"/>
</dbReference>
<dbReference type="GO" id="GO:0006260">
    <property type="term" value="P:DNA replication"/>
    <property type="evidence" value="ECO:0007669"/>
    <property type="project" value="UniProtKB-UniRule"/>
</dbReference>
<dbReference type="GO" id="GO:0045892">
    <property type="term" value="P:negative regulation of DNA-templated transcription"/>
    <property type="evidence" value="ECO:0007669"/>
    <property type="project" value="UniProtKB-UniRule"/>
</dbReference>
<dbReference type="GO" id="GO:0006508">
    <property type="term" value="P:proteolysis"/>
    <property type="evidence" value="ECO:0007669"/>
    <property type="project" value="InterPro"/>
</dbReference>
<dbReference type="GO" id="GO:0009432">
    <property type="term" value="P:SOS response"/>
    <property type="evidence" value="ECO:0007669"/>
    <property type="project" value="UniProtKB-UniRule"/>
</dbReference>
<dbReference type="CDD" id="cd06529">
    <property type="entry name" value="S24_LexA-like"/>
    <property type="match status" value="1"/>
</dbReference>
<dbReference type="FunFam" id="1.10.10.10:FF:000102">
    <property type="entry name" value="LexA repressor"/>
    <property type="match status" value="1"/>
</dbReference>
<dbReference type="FunFam" id="2.10.109.10:FF:000001">
    <property type="entry name" value="LexA repressor"/>
    <property type="match status" value="1"/>
</dbReference>
<dbReference type="Gene3D" id="2.10.109.10">
    <property type="entry name" value="Umud Fragment, subunit A"/>
    <property type="match status" value="1"/>
</dbReference>
<dbReference type="Gene3D" id="1.10.10.10">
    <property type="entry name" value="Winged helix-like DNA-binding domain superfamily/Winged helix DNA-binding domain"/>
    <property type="match status" value="1"/>
</dbReference>
<dbReference type="HAMAP" id="MF_00015">
    <property type="entry name" value="LexA"/>
    <property type="match status" value="1"/>
</dbReference>
<dbReference type="InterPro" id="IPR006200">
    <property type="entry name" value="LexA"/>
</dbReference>
<dbReference type="InterPro" id="IPR039418">
    <property type="entry name" value="LexA-like"/>
</dbReference>
<dbReference type="InterPro" id="IPR036286">
    <property type="entry name" value="LexA/Signal_pep-like_sf"/>
</dbReference>
<dbReference type="InterPro" id="IPR006199">
    <property type="entry name" value="LexA_DNA-bd_dom"/>
</dbReference>
<dbReference type="InterPro" id="IPR050077">
    <property type="entry name" value="LexA_repressor"/>
</dbReference>
<dbReference type="InterPro" id="IPR006197">
    <property type="entry name" value="Peptidase_S24_LexA"/>
</dbReference>
<dbReference type="InterPro" id="IPR015927">
    <property type="entry name" value="Peptidase_S24_S26A/B/C"/>
</dbReference>
<dbReference type="InterPro" id="IPR036388">
    <property type="entry name" value="WH-like_DNA-bd_sf"/>
</dbReference>
<dbReference type="InterPro" id="IPR036390">
    <property type="entry name" value="WH_DNA-bd_sf"/>
</dbReference>
<dbReference type="NCBIfam" id="TIGR00498">
    <property type="entry name" value="lexA"/>
    <property type="match status" value="1"/>
</dbReference>
<dbReference type="PANTHER" id="PTHR33516">
    <property type="entry name" value="LEXA REPRESSOR"/>
    <property type="match status" value="1"/>
</dbReference>
<dbReference type="PANTHER" id="PTHR33516:SF2">
    <property type="entry name" value="LEXA REPRESSOR-RELATED"/>
    <property type="match status" value="1"/>
</dbReference>
<dbReference type="Pfam" id="PF01726">
    <property type="entry name" value="LexA_DNA_bind"/>
    <property type="match status" value="1"/>
</dbReference>
<dbReference type="Pfam" id="PF00717">
    <property type="entry name" value="Peptidase_S24"/>
    <property type="match status" value="1"/>
</dbReference>
<dbReference type="PRINTS" id="PR00726">
    <property type="entry name" value="LEXASERPTASE"/>
</dbReference>
<dbReference type="SUPFAM" id="SSF51306">
    <property type="entry name" value="LexA/Signal peptidase"/>
    <property type="match status" value="1"/>
</dbReference>
<dbReference type="SUPFAM" id="SSF46785">
    <property type="entry name" value="Winged helix' DNA-binding domain"/>
    <property type="match status" value="1"/>
</dbReference>
<protein>
    <recommendedName>
        <fullName evidence="1">LexA repressor</fullName>
        <ecNumber evidence="1">3.4.21.88</ecNumber>
    </recommendedName>
</protein>
<accession>B0CGU2</accession>
<evidence type="ECO:0000255" key="1">
    <source>
        <dbReference type="HAMAP-Rule" id="MF_00015"/>
    </source>
</evidence>
<organism>
    <name type="scientific">Brucella suis (strain ATCC 23445 / NCTC 10510)</name>
    <dbReference type="NCBI Taxonomy" id="470137"/>
    <lineage>
        <taxon>Bacteria</taxon>
        <taxon>Pseudomonadati</taxon>
        <taxon>Pseudomonadota</taxon>
        <taxon>Alphaproteobacteria</taxon>
        <taxon>Hyphomicrobiales</taxon>
        <taxon>Brucellaceae</taxon>
        <taxon>Brucella/Ochrobactrum group</taxon>
        <taxon>Brucella</taxon>
    </lineage>
</organism>
<name>LEXA_BRUSI</name>
<keyword id="KW-0068">Autocatalytic cleavage</keyword>
<keyword id="KW-0227">DNA damage</keyword>
<keyword id="KW-0234">DNA repair</keyword>
<keyword id="KW-0235">DNA replication</keyword>
<keyword id="KW-0238">DNA-binding</keyword>
<keyword id="KW-0378">Hydrolase</keyword>
<keyword id="KW-0678">Repressor</keyword>
<keyword id="KW-0742">SOS response</keyword>
<keyword id="KW-0804">Transcription</keyword>
<keyword id="KW-0805">Transcription regulation</keyword>
<comment type="function">
    <text evidence="1">Represses a number of genes involved in the response to DNA damage (SOS response), including recA and lexA. In the presence of single-stranded DNA, RecA interacts with LexA causing an autocatalytic cleavage which disrupts the DNA-binding part of LexA, leading to derepression of the SOS regulon and eventually DNA repair.</text>
</comment>
<comment type="catalytic activity">
    <reaction evidence="1">
        <text>Hydrolysis of Ala-|-Gly bond in repressor LexA.</text>
        <dbReference type="EC" id="3.4.21.88"/>
    </reaction>
</comment>
<comment type="subunit">
    <text evidence="1">Homodimer.</text>
</comment>
<comment type="similarity">
    <text evidence="1">Belongs to the peptidase S24 family.</text>
</comment>
<reference key="1">
    <citation type="submission" date="2007-12" db="EMBL/GenBank/DDBJ databases">
        <title>Brucella suis ATCC 23445 whole genome shotgun sequencing project.</title>
        <authorList>
            <person name="Setubal J.C."/>
            <person name="Bowns C."/>
            <person name="Boyle S."/>
            <person name="Crasta O.R."/>
            <person name="Czar M.J."/>
            <person name="Dharmanolla C."/>
            <person name="Gillespie J.J."/>
            <person name="Kenyon R.W."/>
            <person name="Lu J."/>
            <person name="Mane S."/>
            <person name="Mohapatra S."/>
            <person name="Nagrani S."/>
            <person name="Purkayastha A."/>
            <person name="Rajasimha H.K."/>
            <person name="Shallom J.M."/>
            <person name="Shallom S."/>
            <person name="Shukla M."/>
            <person name="Snyder E.E."/>
            <person name="Sobral B.W."/>
            <person name="Wattam A.R."/>
            <person name="Will R."/>
            <person name="Williams K."/>
            <person name="Yoo H."/>
            <person name="Bruce D."/>
            <person name="Detter C."/>
            <person name="Munk C."/>
            <person name="Brettin T.S."/>
        </authorList>
    </citation>
    <scope>NUCLEOTIDE SEQUENCE [LARGE SCALE GENOMIC DNA]</scope>
    <source>
        <strain>ATCC 23445 / NCTC 10510</strain>
    </source>
</reference>
<feature type="chain" id="PRO_1000074049" description="LexA repressor">
    <location>
        <begin position="1"/>
        <end position="240"/>
    </location>
</feature>
<feature type="DNA-binding region" description="H-T-H motif" evidence="1">
    <location>
        <begin position="26"/>
        <end position="46"/>
    </location>
</feature>
<feature type="active site" description="For autocatalytic cleavage activity" evidence="1">
    <location>
        <position position="161"/>
    </location>
</feature>
<feature type="active site" description="For autocatalytic cleavage activity" evidence="1">
    <location>
        <position position="199"/>
    </location>
</feature>
<feature type="site" description="Cleavage; by autolysis" evidence="1">
    <location>
        <begin position="126"/>
        <end position="127"/>
    </location>
</feature>
<sequence>MLTRKQHELLLFIHERLKETGIPPSFDEMKEALDLASKSGIHRLITALEERGFIRRLPNRARALEVLRLPDSIAPGLSPQKKFAPSVIEGSLGKVASVQPVRPAPAPQNSEAPATVSVPVMGRIAAGVPISAIQNQTHMLSLPPEMIGAGEHYALEVKGDSMIDAGIFDGDTVIIKRGDTANPGEIVVALVDEEEATLKRFRREGASIALEAANPAYETRIFGPDRVHVQGKLVGLIRRY</sequence>
<proteinExistence type="inferred from homology"/>
<gene>
    <name evidence="1" type="primary">lexA</name>
    <name type="ordered locus">BSUIS_A1192</name>
</gene>